<comment type="function">
    <text evidence="1 4 5">Component of cell cycle checkpoints, which ensures chromosome segregation during meiosis and mitosis (PubMed:18923084). During meiotic prophase, it is involved in the regulation of the synapsis checkpoint, which monitors whether homologous chromosomes have synapsed, and the DNA damage response (PubMed:30293721). Plays a central role in chromosome cohesion during cell division by preventing premature dissociation of cohesin complex after prophase, when most of cohesin complex dissociates from chromosomes arms (By similarity).</text>
</comment>
<comment type="subcellular location">
    <subcellularLocation>
        <location evidence="5">Nucleus</location>
    </subcellularLocation>
    <subcellularLocation>
        <location evidence="4">Chromosome</location>
        <location evidence="4">Centromere</location>
    </subcellularLocation>
    <subcellularLocation>
        <location evidence="4">Chromosome</location>
    </subcellularLocation>
    <text evidence="4 5">Localizes to nuclei prior to entry into meiotic prophase and late meiotic prophase (PubMed:30293721). Localizes to the short arms of bivalent chromosomes from late diakinesis until anaphase II (PubMed:18923084).</text>
</comment>
<comment type="alternative products">
    <event type="alternative splicing"/>
    <isoform>
        <id>Q18412-1</id>
        <name evidence="8">b</name>
        <sequence type="displayed"/>
    </isoform>
    <isoform>
        <id>Q18412-2</id>
        <name evidence="7">a</name>
        <sequence type="described" ref="VSP_060484"/>
    </isoform>
</comment>
<comment type="tissue specificity">
    <text evidence="4 5">Expressed in gonads.</text>
</comment>
<comment type="developmental stage">
    <text evidence="4">Expressed in embryos.</text>
</comment>
<comment type="disruption phenotype">
    <text evidence="4 5">Viable with 100% of viable progeny (PubMed:30293721). Defects in the regulation of the synapsis checkpoint and DNA damage response in meiosis with an increased rate of synaptonemal complex disassembly in late pachytene meiotic nuclei and an increased number of rad-51 positive and hus-1 positive nuclei in meiotic prophase (PubMed:30293721). Reduces the number of apoptotic nuclei in the syp-1 mutant background, which is indicative of inactivation of the synapsis checkpoint or the DNA damage response (PubMed:30293721). RNAi-mediated knockdown results in chromosome segregation defects during meiosis and mitosis (PubMed:18923084).</text>
</comment>
<comment type="similarity">
    <text evidence="6">Belongs to the shugoshin family.</text>
</comment>
<reference key="1">
    <citation type="journal article" date="1998" name="Science">
        <title>Genome sequence of the nematode C. elegans: a platform for investigating biology.</title>
        <authorList>
            <consortium name="The C. elegans sequencing consortium"/>
        </authorList>
    </citation>
    <scope>NUCLEOTIDE SEQUENCE [LARGE SCALE GENOMIC DNA]</scope>
    <source>
        <strain>Bristol N2</strain>
    </source>
</reference>
<reference key="2">
    <citation type="journal article" date="2008" name="Genes Dev.">
        <title>LAB-1 antagonizes the Aurora B kinase in C. elegans.</title>
        <authorList>
            <person name="de Carvalho C.E."/>
            <person name="Zaaijer S."/>
            <person name="Smolikov S."/>
            <person name="Gu Y."/>
            <person name="Schumacher J.M."/>
            <person name="Colaiacovo M.P."/>
        </authorList>
    </citation>
    <scope>FUNCTION</scope>
    <scope>SUBCELLULAR LOCATION</scope>
    <scope>TISSUE SPECIFICITY</scope>
    <scope>DEVELOPMENTAL STAGE</scope>
    <scope>DISRUPTION PHENOTYPE</scope>
    <scope>MUTAGENESIS OF 157-GLU--PHE-309</scope>
</reference>
<reference key="3">
    <citation type="journal article" date="2018" name="Curr. Biol.">
        <title>Shugoshin is essential for meiotic prophase checkpoints in C. elegans.</title>
        <authorList>
            <person name="Bohr T."/>
            <person name="Nelson C.R."/>
            <person name="Giacopazzi S."/>
            <person name="Lamelza P."/>
            <person name="Bhalla N."/>
        </authorList>
    </citation>
    <scope>FUNCTION</scope>
    <scope>SUBCELLULAR LOCATION</scope>
    <scope>TISSUE SPECIFICITY</scope>
    <scope>DISRUPTION PHENOTYPE</scope>
    <scope>MUTAGENESIS OF 157-GLU--PHE-309</scope>
</reference>
<proteinExistence type="evidence at protein level"/>
<organism>
    <name type="scientific">Caenorhabditis elegans</name>
    <dbReference type="NCBI Taxonomy" id="6239"/>
    <lineage>
        <taxon>Eukaryota</taxon>
        <taxon>Metazoa</taxon>
        <taxon>Ecdysozoa</taxon>
        <taxon>Nematoda</taxon>
        <taxon>Chromadorea</taxon>
        <taxon>Rhabditida</taxon>
        <taxon>Rhabditina</taxon>
        <taxon>Rhabditomorpha</taxon>
        <taxon>Rhabditoidea</taxon>
        <taxon>Rhabditidae</taxon>
        <taxon>Peloderinae</taxon>
        <taxon>Caenorhabditis</taxon>
    </lineage>
</organism>
<accession>Q18412</accession>
<accession>W6SBE3</accession>
<gene>
    <name evidence="8" type="primary">sgo-1</name>
    <name evidence="8" type="ORF">C33H5.15</name>
</gene>
<name>SGO1_CAEEL</name>
<evidence type="ECO:0000250" key="1">
    <source>
        <dbReference type="UniProtKB" id="Q5FBB7"/>
    </source>
</evidence>
<evidence type="ECO:0000255" key="2"/>
<evidence type="ECO:0000256" key="3">
    <source>
        <dbReference type="SAM" id="MobiDB-lite"/>
    </source>
</evidence>
<evidence type="ECO:0000269" key="4">
    <source>
    </source>
</evidence>
<evidence type="ECO:0000269" key="5">
    <source>
    </source>
</evidence>
<evidence type="ECO:0000305" key="6"/>
<evidence type="ECO:0000312" key="7">
    <source>
        <dbReference type="WormBase" id="C33H5.15a"/>
    </source>
</evidence>
<evidence type="ECO:0000312" key="8">
    <source>
        <dbReference type="WormBase" id="C33H5.15b"/>
    </source>
</evidence>
<protein>
    <recommendedName>
        <fullName>Shugoshin</fullName>
    </recommendedName>
</protein>
<sequence length="309" mass="34567">MDAKTAQSIFGGIVAAKKRPSKEVPEPTINFKSANDSLVKKNLLLKQQVVQCTKTIEKLRNENVALRQKNQELIDGTLEQRIELIVEQRLKFRLAHAAVLHKKLVQNIQQTGLELDGLFKDLEPEPSGLNTRRPPKLELNLERVDEIPFCQSSMQGEIDENEIRFDNNSSQSTSSIQNAVNGTPRKKQSVGKGRRSELFQSFNADSSIVEEASTIPTNRRAPMLIAPSSTPAGPSKPTARKPPTPRFKKPSTPALAPQSDDTELSSTIQVRRQRSAKMNIKSLKEPSGKDKLRRPGKHDEPMPYINTFF</sequence>
<keyword id="KW-0025">Alternative splicing</keyword>
<keyword id="KW-0131">Cell cycle</keyword>
<keyword id="KW-0132">Cell division</keyword>
<keyword id="KW-0137">Centromere</keyword>
<keyword id="KW-0158">Chromosome</keyword>
<keyword id="KW-0159">Chromosome partition</keyword>
<keyword id="KW-0175">Coiled coil</keyword>
<keyword id="KW-0539">Nucleus</keyword>
<keyword id="KW-1185">Reference proteome</keyword>
<dbReference type="EMBL" id="BX284604">
    <property type="protein sequence ID" value="CCD66579.1"/>
    <property type="molecule type" value="Genomic_DNA"/>
</dbReference>
<dbReference type="EMBL" id="BX284604">
    <property type="protein sequence ID" value="CDM63523.1"/>
    <property type="molecule type" value="Genomic_DNA"/>
</dbReference>
<dbReference type="PIR" id="T34148">
    <property type="entry name" value="T34148"/>
</dbReference>
<dbReference type="RefSeq" id="NP_001294168.1">
    <molecule id="Q18412-1"/>
    <property type="nucleotide sequence ID" value="NM_001307239.2"/>
</dbReference>
<dbReference type="RefSeq" id="NP_501290.2">
    <molecule id="Q18412-2"/>
    <property type="nucleotide sequence ID" value="NM_068889.5"/>
</dbReference>
<dbReference type="SMR" id="Q18412"/>
<dbReference type="BioGRID" id="48020">
    <property type="interactions" value="4"/>
</dbReference>
<dbReference type="FunCoup" id="Q18412">
    <property type="interactions" value="1423"/>
</dbReference>
<dbReference type="IntAct" id="Q18412">
    <property type="interactions" value="2"/>
</dbReference>
<dbReference type="STRING" id="6239.C33H5.15b.1"/>
<dbReference type="PaxDb" id="6239-C33H5.15"/>
<dbReference type="PeptideAtlas" id="Q18412"/>
<dbReference type="EnsemblMetazoa" id="C33H5.15a.1">
    <molecule id="Q18412-2"/>
    <property type="protein sequence ID" value="C33H5.15a.1"/>
    <property type="gene ID" value="WBGene00016381"/>
</dbReference>
<dbReference type="EnsemblMetazoa" id="C33H5.15b.1">
    <molecule id="Q18412-1"/>
    <property type="protein sequence ID" value="C33H5.15b.1"/>
    <property type="gene ID" value="WBGene00016381"/>
</dbReference>
<dbReference type="EnsemblMetazoa" id="C33H5.15b.2">
    <molecule id="Q18412-1"/>
    <property type="protein sequence ID" value="C33H5.15b.2"/>
    <property type="gene ID" value="WBGene00016381"/>
</dbReference>
<dbReference type="GeneID" id="183189"/>
<dbReference type="KEGG" id="cel:CELE_C33H5.15"/>
<dbReference type="UCSC" id="C33H5.15">
    <molecule id="Q18412-1"/>
    <property type="organism name" value="c. elegans"/>
</dbReference>
<dbReference type="AGR" id="WB:WBGene00016381"/>
<dbReference type="CTD" id="183189"/>
<dbReference type="WormBase" id="C33H5.15a">
    <molecule id="Q18412-2"/>
    <property type="protein sequence ID" value="CE34732"/>
    <property type="gene ID" value="WBGene00016381"/>
    <property type="gene designation" value="sgo-1"/>
</dbReference>
<dbReference type="WormBase" id="C33H5.15b">
    <molecule id="Q18412-1"/>
    <property type="protein sequence ID" value="CE49542"/>
    <property type="gene ID" value="WBGene00016381"/>
    <property type="gene designation" value="sgo-1"/>
</dbReference>
<dbReference type="eggNOG" id="ENOG502RT7Z">
    <property type="taxonomic scope" value="Eukaryota"/>
</dbReference>
<dbReference type="HOGENOM" id="CLU_858533_0_0_1"/>
<dbReference type="InParanoid" id="Q18412"/>
<dbReference type="OMA" id="DEPMPFI"/>
<dbReference type="OrthoDB" id="5821911at2759"/>
<dbReference type="PRO" id="PR:Q18412"/>
<dbReference type="Proteomes" id="UP000001940">
    <property type="component" value="Chromosome IV"/>
</dbReference>
<dbReference type="Bgee" id="WBGene00016381">
    <property type="expression patterns" value="Expressed in germ line (C elegans) and 4 other cell types or tissues"/>
</dbReference>
<dbReference type="GO" id="GO:0000775">
    <property type="term" value="C:chromosome, centromeric region"/>
    <property type="evidence" value="ECO:0007669"/>
    <property type="project" value="UniProtKB-SubCell"/>
</dbReference>
<dbReference type="GO" id="GO:0005634">
    <property type="term" value="C:nucleus"/>
    <property type="evidence" value="ECO:0007669"/>
    <property type="project" value="UniProtKB-SubCell"/>
</dbReference>
<dbReference type="GO" id="GO:0051301">
    <property type="term" value="P:cell division"/>
    <property type="evidence" value="ECO:0007669"/>
    <property type="project" value="UniProtKB-KW"/>
</dbReference>
<dbReference type="GO" id="GO:0007059">
    <property type="term" value="P:chromosome segregation"/>
    <property type="evidence" value="ECO:0007669"/>
    <property type="project" value="UniProtKB-KW"/>
</dbReference>
<dbReference type="InterPro" id="IPR011516">
    <property type="entry name" value="Shugoshin_N"/>
</dbReference>
<dbReference type="Pfam" id="PF07558">
    <property type="entry name" value="Shugoshin_N"/>
    <property type="match status" value="1"/>
</dbReference>
<feature type="chain" id="PRO_0000055442" description="Shugoshin">
    <location>
        <begin position="1"/>
        <end position="309"/>
    </location>
</feature>
<feature type="region of interest" description="Disordered" evidence="3">
    <location>
        <begin position="165"/>
        <end position="195"/>
    </location>
</feature>
<feature type="region of interest" description="Disordered" evidence="3">
    <location>
        <begin position="210"/>
        <end position="309"/>
    </location>
</feature>
<feature type="coiled-coil region" evidence="2">
    <location>
        <begin position="42"/>
        <end position="77"/>
    </location>
</feature>
<feature type="compositionally biased region" description="Low complexity" evidence="3">
    <location>
        <begin position="167"/>
        <end position="178"/>
    </location>
</feature>
<feature type="compositionally biased region" description="Basic residues" evidence="3">
    <location>
        <begin position="184"/>
        <end position="193"/>
    </location>
</feature>
<feature type="splice variant" id="VSP_060484" description="In isoform a." evidence="6">
    <location>
        <begin position="268"/>
        <end position="269"/>
    </location>
</feature>
<feature type="mutagenesis site" description="In tm2443; chromosome segregation defects during meiosis and mitosis." evidence="4 5">
    <location>
        <begin position="157"/>
        <end position="309"/>
    </location>
</feature>